<gene>
    <name evidence="1" type="primary">rimP</name>
    <name type="ordered locus">Rv2842c</name>
    <name type="ORF">MTCY24A1.15</name>
</gene>
<name>RIMP_MYCTU</name>
<evidence type="ECO:0000255" key="1">
    <source>
        <dbReference type="HAMAP-Rule" id="MF_01077"/>
    </source>
</evidence>
<dbReference type="EMBL" id="AL123456">
    <property type="protein sequence ID" value="CCP45643.1"/>
    <property type="molecule type" value="Genomic_DNA"/>
</dbReference>
<dbReference type="PIR" id="E70588">
    <property type="entry name" value="E70588"/>
</dbReference>
<dbReference type="RefSeq" id="NP_217358.1">
    <property type="nucleotide sequence ID" value="NC_000962.3"/>
</dbReference>
<dbReference type="RefSeq" id="WP_003899507.1">
    <property type="nucleotide sequence ID" value="NZ_NVQJ01000006.1"/>
</dbReference>
<dbReference type="SMR" id="P9WH17"/>
<dbReference type="FunCoup" id="P9WH17">
    <property type="interactions" value="22"/>
</dbReference>
<dbReference type="STRING" id="83332.Rv2842c"/>
<dbReference type="PaxDb" id="83332-Rv2842c"/>
<dbReference type="DNASU" id="888159"/>
<dbReference type="GeneID" id="45426829"/>
<dbReference type="GeneID" id="888159"/>
<dbReference type="KEGG" id="mtu:Rv2842c"/>
<dbReference type="KEGG" id="mtv:RVBD_2842c"/>
<dbReference type="TubercuList" id="Rv2842c"/>
<dbReference type="eggNOG" id="COG0779">
    <property type="taxonomic scope" value="Bacteria"/>
</dbReference>
<dbReference type="InParanoid" id="P9WH17"/>
<dbReference type="OrthoDB" id="9805006at2"/>
<dbReference type="PhylomeDB" id="P9WH17"/>
<dbReference type="Proteomes" id="UP000001584">
    <property type="component" value="Chromosome"/>
</dbReference>
<dbReference type="GO" id="GO:0005829">
    <property type="term" value="C:cytosol"/>
    <property type="evidence" value="ECO:0000318"/>
    <property type="project" value="GO_Central"/>
</dbReference>
<dbReference type="GO" id="GO:0005886">
    <property type="term" value="C:plasma membrane"/>
    <property type="evidence" value="ECO:0007005"/>
    <property type="project" value="MTBBASE"/>
</dbReference>
<dbReference type="GO" id="GO:0000028">
    <property type="term" value="P:ribosomal small subunit assembly"/>
    <property type="evidence" value="ECO:0000318"/>
    <property type="project" value="GO_Central"/>
</dbReference>
<dbReference type="GO" id="GO:0006412">
    <property type="term" value="P:translation"/>
    <property type="evidence" value="ECO:0000318"/>
    <property type="project" value="GO_Central"/>
</dbReference>
<dbReference type="CDD" id="cd01734">
    <property type="entry name" value="YlxS_C"/>
    <property type="match status" value="1"/>
</dbReference>
<dbReference type="Gene3D" id="3.30.300.70">
    <property type="entry name" value="RimP-like superfamily, N-terminal"/>
    <property type="match status" value="1"/>
</dbReference>
<dbReference type="HAMAP" id="MF_01077">
    <property type="entry name" value="RimP"/>
    <property type="match status" value="1"/>
</dbReference>
<dbReference type="InterPro" id="IPR003728">
    <property type="entry name" value="Ribosome_maturation_RimP"/>
</dbReference>
<dbReference type="InterPro" id="IPR028998">
    <property type="entry name" value="RimP_C"/>
</dbReference>
<dbReference type="InterPro" id="IPR036847">
    <property type="entry name" value="RimP_C_sf"/>
</dbReference>
<dbReference type="InterPro" id="IPR028989">
    <property type="entry name" value="RimP_N"/>
</dbReference>
<dbReference type="InterPro" id="IPR035956">
    <property type="entry name" value="RimP_N_sf"/>
</dbReference>
<dbReference type="NCBIfam" id="NF000930">
    <property type="entry name" value="PRK00092.2-2"/>
    <property type="match status" value="1"/>
</dbReference>
<dbReference type="PANTHER" id="PTHR33867">
    <property type="entry name" value="RIBOSOME MATURATION FACTOR RIMP"/>
    <property type="match status" value="1"/>
</dbReference>
<dbReference type="PANTHER" id="PTHR33867:SF1">
    <property type="entry name" value="RIBOSOME MATURATION FACTOR RIMP"/>
    <property type="match status" value="1"/>
</dbReference>
<dbReference type="Pfam" id="PF17384">
    <property type="entry name" value="DUF150_C"/>
    <property type="match status" value="1"/>
</dbReference>
<dbReference type="Pfam" id="PF02576">
    <property type="entry name" value="RimP_N"/>
    <property type="match status" value="1"/>
</dbReference>
<dbReference type="SUPFAM" id="SSF74942">
    <property type="entry name" value="YhbC-like, C-terminal domain"/>
    <property type="match status" value="1"/>
</dbReference>
<dbReference type="SUPFAM" id="SSF75420">
    <property type="entry name" value="YhbC-like, N-terminal domain"/>
    <property type="match status" value="1"/>
</dbReference>
<accession>P9WH17</accession>
<accession>L0TDI5</accession>
<accession>O05817</accession>
<accession>P67214</accession>
<reference key="1">
    <citation type="journal article" date="1998" name="Nature">
        <title>Deciphering the biology of Mycobacterium tuberculosis from the complete genome sequence.</title>
        <authorList>
            <person name="Cole S.T."/>
            <person name="Brosch R."/>
            <person name="Parkhill J."/>
            <person name="Garnier T."/>
            <person name="Churcher C.M."/>
            <person name="Harris D.E."/>
            <person name="Gordon S.V."/>
            <person name="Eiglmeier K."/>
            <person name="Gas S."/>
            <person name="Barry C.E. III"/>
            <person name="Tekaia F."/>
            <person name="Badcock K."/>
            <person name="Basham D."/>
            <person name="Brown D."/>
            <person name="Chillingworth T."/>
            <person name="Connor R."/>
            <person name="Davies R.M."/>
            <person name="Devlin K."/>
            <person name="Feltwell T."/>
            <person name="Gentles S."/>
            <person name="Hamlin N."/>
            <person name="Holroyd S."/>
            <person name="Hornsby T."/>
            <person name="Jagels K."/>
            <person name="Krogh A."/>
            <person name="McLean J."/>
            <person name="Moule S."/>
            <person name="Murphy L.D."/>
            <person name="Oliver S."/>
            <person name="Osborne J."/>
            <person name="Quail M.A."/>
            <person name="Rajandream M.A."/>
            <person name="Rogers J."/>
            <person name="Rutter S."/>
            <person name="Seeger K."/>
            <person name="Skelton S."/>
            <person name="Squares S."/>
            <person name="Squares R."/>
            <person name="Sulston J.E."/>
            <person name="Taylor K."/>
            <person name="Whitehead S."/>
            <person name="Barrell B.G."/>
        </authorList>
    </citation>
    <scope>NUCLEOTIDE SEQUENCE [LARGE SCALE GENOMIC DNA]</scope>
    <source>
        <strain>ATCC 25618 / H37Rv</strain>
    </source>
</reference>
<reference key="2">
    <citation type="journal article" date="2008" name="BMC Syst. Biol.">
        <title>targetTB: a target identification pipeline for Mycobacterium tuberculosis through an interactome, reactome and genome-scale structural analysis.</title>
        <authorList>
            <person name="Raman K."/>
            <person name="Yeturu K."/>
            <person name="Chandra N."/>
        </authorList>
    </citation>
    <scope>IDENTIFICATION AS A DRUG TARGET [LARGE SCALE ANALYSIS]</scope>
</reference>
<reference key="3">
    <citation type="journal article" date="2011" name="Mol. Cell. Proteomics">
        <title>Proteogenomic analysis of Mycobacterium tuberculosis by high resolution mass spectrometry.</title>
        <authorList>
            <person name="Kelkar D.S."/>
            <person name="Kumar D."/>
            <person name="Kumar P."/>
            <person name="Balakrishnan L."/>
            <person name="Muthusamy B."/>
            <person name="Yadav A.K."/>
            <person name="Shrivastava P."/>
            <person name="Marimuthu A."/>
            <person name="Anand S."/>
            <person name="Sundaram H."/>
            <person name="Kingsbury R."/>
            <person name="Harsha H.C."/>
            <person name="Nair B."/>
            <person name="Prasad T.S."/>
            <person name="Chauhan D.S."/>
            <person name="Katoch K."/>
            <person name="Katoch V.M."/>
            <person name="Kumar P."/>
            <person name="Chaerkady R."/>
            <person name="Ramachandran S."/>
            <person name="Dash D."/>
            <person name="Pandey A."/>
        </authorList>
    </citation>
    <scope>IDENTIFICATION BY MASS SPECTROMETRY [LARGE SCALE ANALYSIS]</scope>
    <source>
        <strain>ATCC 25618 / H37Rv</strain>
    </source>
</reference>
<organism>
    <name type="scientific">Mycobacterium tuberculosis (strain ATCC 25618 / H37Rv)</name>
    <dbReference type="NCBI Taxonomy" id="83332"/>
    <lineage>
        <taxon>Bacteria</taxon>
        <taxon>Bacillati</taxon>
        <taxon>Actinomycetota</taxon>
        <taxon>Actinomycetes</taxon>
        <taxon>Mycobacteriales</taxon>
        <taxon>Mycobacteriaceae</taxon>
        <taxon>Mycobacterium</taxon>
        <taxon>Mycobacterium tuberculosis complex</taxon>
    </lineage>
</organism>
<sequence length="183" mass="19565">MTTGLPSQRQVIELLGADFACAGYEIEDVVIDARARPPRIAVIADGDAPLDLDTIAALSRRASALLDGLDGANKIRGRYLLEVSSPGVERPLTSEKHFRRARGRKVELVLSDGSRLTGRVGEMRAGTVALVIREDRGWAVREIPLAEIVKAVVQVEFSPPAPAELELAQSSEMGLARGTEAGA</sequence>
<feature type="chain" id="PRO_0000181892" description="Ribosome maturation factor RimP">
    <location>
        <begin position="1"/>
        <end position="183"/>
    </location>
</feature>
<keyword id="KW-0963">Cytoplasm</keyword>
<keyword id="KW-1185">Reference proteome</keyword>
<keyword id="KW-0690">Ribosome biogenesis</keyword>
<comment type="function">
    <text evidence="1">Required for maturation of 30S ribosomal subunits.</text>
</comment>
<comment type="subcellular location">
    <subcellularLocation>
        <location evidence="1">Cytoplasm</location>
    </subcellularLocation>
</comment>
<comment type="miscellaneous">
    <text>Was identified as a high-confidence drug target.</text>
</comment>
<comment type="similarity">
    <text evidence="1">Belongs to the RimP family.</text>
</comment>
<protein>
    <recommendedName>
        <fullName evidence="1">Ribosome maturation factor RimP</fullName>
    </recommendedName>
</protein>
<proteinExistence type="evidence at protein level"/>